<feature type="chain" id="PRO_1000200547" description="UvrABC system protein B">
    <location>
        <begin position="1"/>
        <end position="673"/>
    </location>
</feature>
<feature type="domain" description="Helicase ATP-binding" evidence="1">
    <location>
        <begin position="26"/>
        <end position="183"/>
    </location>
</feature>
<feature type="domain" description="Helicase C-terminal" evidence="1">
    <location>
        <begin position="431"/>
        <end position="597"/>
    </location>
</feature>
<feature type="domain" description="UVR" evidence="1">
    <location>
        <begin position="633"/>
        <end position="668"/>
    </location>
</feature>
<feature type="region of interest" description="Disordered" evidence="2">
    <location>
        <begin position="608"/>
        <end position="627"/>
    </location>
</feature>
<feature type="short sequence motif" description="Beta-hairpin">
    <location>
        <begin position="92"/>
        <end position="115"/>
    </location>
</feature>
<feature type="binding site" evidence="1">
    <location>
        <begin position="39"/>
        <end position="46"/>
    </location>
    <ligand>
        <name>ATP</name>
        <dbReference type="ChEBI" id="CHEBI:30616"/>
    </ligand>
</feature>
<reference key="1">
    <citation type="journal article" date="2009" name="PLoS Genet.">
        <title>Organised genome dynamics in the Escherichia coli species results in highly diverse adaptive paths.</title>
        <authorList>
            <person name="Touchon M."/>
            <person name="Hoede C."/>
            <person name="Tenaillon O."/>
            <person name="Barbe V."/>
            <person name="Baeriswyl S."/>
            <person name="Bidet P."/>
            <person name="Bingen E."/>
            <person name="Bonacorsi S."/>
            <person name="Bouchier C."/>
            <person name="Bouvet O."/>
            <person name="Calteau A."/>
            <person name="Chiapello H."/>
            <person name="Clermont O."/>
            <person name="Cruveiller S."/>
            <person name="Danchin A."/>
            <person name="Diard M."/>
            <person name="Dossat C."/>
            <person name="Karoui M.E."/>
            <person name="Frapy E."/>
            <person name="Garry L."/>
            <person name="Ghigo J.M."/>
            <person name="Gilles A.M."/>
            <person name="Johnson J."/>
            <person name="Le Bouguenec C."/>
            <person name="Lescat M."/>
            <person name="Mangenot S."/>
            <person name="Martinez-Jehanne V."/>
            <person name="Matic I."/>
            <person name="Nassif X."/>
            <person name="Oztas S."/>
            <person name="Petit M.A."/>
            <person name="Pichon C."/>
            <person name="Rouy Z."/>
            <person name="Ruf C.S."/>
            <person name="Schneider D."/>
            <person name="Tourret J."/>
            <person name="Vacherie B."/>
            <person name="Vallenet D."/>
            <person name="Medigue C."/>
            <person name="Rocha E.P.C."/>
            <person name="Denamur E."/>
        </authorList>
    </citation>
    <scope>NUCLEOTIDE SEQUENCE [LARGE SCALE GENOMIC DNA]</scope>
    <source>
        <strain>ED1a</strain>
    </source>
</reference>
<proteinExistence type="inferred from homology"/>
<sequence length="673" mass="76211">MSKPFKLNSAFKPSGDQPEAIRRLEEGLEDGLAHQTLLGVTGSGKTFTIANVIADLQRPTMVLAPNKTLAAQLYGEMKEFFPENAVEYFVSYYDYYQPEAYVPSSDTFIEKDASVNEHIEQMRLSATKAMLERRDVVVVASVSAIYGLGDPDLYLKMMLHLTVGMIIDQRAILRRLAELQYARNDQAFQRGTFRVRGEVIDIFPAESDDIALRVELFDEEVERLSLFDPLTGQIVSTIPRFTIYPKTHYVTPRERIVQAMEEIKEELAARRKVLLENNKLLEEQRLTQRTQFDLEMMNELGYCSGIENYSRFLSGRGPGEPPPTLFDYLPADGLLVVDESHVTIPQIGGMYRGDRARKETLVEYGFRLPSALDNRPLKFEEFEALAPQTIYVSATPGNYELEKSGGDVVDQVVRPTGLLDPIIEVRPVATQVDDLLSEIRQRAAINERVLVTTLTKRMAEDLTEYLEEHGERVRYLHSDIDTVERMEIIRDLRLGEFDVLVGINLLREGLDMPEVSLVAILDADKEGFLRSERSLIQTIGRAARNVNGKAILYGDKITPSMAKAIGETERRREKQQKYNEEHGITPQGLNKKVVDILALGQNIAKTKAKGRGKSRPIVEPDNVPMDMSPKALQQKIHELEGLMMQHAQNLEFEEAAQIRDQLHLLRELFIAAS</sequence>
<comment type="function">
    <text evidence="1">The UvrABC repair system catalyzes the recognition and processing of DNA lesions. A damage recognition complex composed of 2 UvrA and 2 UvrB subunits scans DNA for abnormalities. Upon binding of the UvrA(2)B(2) complex to a putative damaged site, the DNA wraps around one UvrB monomer. DNA wrap is dependent on ATP binding by UvrB and probably causes local melting of the DNA helix, facilitating insertion of UvrB beta-hairpin between the DNA strands. Then UvrB probes one DNA strand for the presence of a lesion. If a lesion is found the UvrA subunits dissociate and the UvrB-DNA preincision complex is formed. This complex is subsequently bound by UvrC and the second UvrB is released. If no lesion is found, the DNA wraps around the other UvrB subunit that will check the other stand for damage.</text>
</comment>
<comment type="subunit">
    <text evidence="1">Forms a heterotetramer with UvrA during the search for lesions. Interacts with UvrC in an incision complex.</text>
</comment>
<comment type="subcellular location">
    <subcellularLocation>
        <location evidence="1">Cytoplasm</location>
    </subcellularLocation>
</comment>
<comment type="domain">
    <text evidence="1">The beta-hairpin motif is involved in DNA binding.</text>
</comment>
<comment type="similarity">
    <text evidence="1">Belongs to the UvrB family.</text>
</comment>
<protein>
    <recommendedName>
        <fullName evidence="1">UvrABC system protein B</fullName>
        <shortName evidence="1">Protein UvrB</shortName>
    </recommendedName>
    <alternativeName>
        <fullName evidence="1">Excinuclease ABC subunit B</fullName>
    </alternativeName>
</protein>
<dbReference type="EMBL" id="CU928162">
    <property type="protein sequence ID" value="CAR06948.1"/>
    <property type="molecule type" value="Genomic_DNA"/>
</dbReference>
<dbReference type="RefSeq" id="WP_000042530.1">
    <property type="nucleotide sequence ID" value="NC_011745.1"/>
</dbReference>
<dbReference type="SMR" id="B7MQN2"/>
<dbReference type="KEGG" id="ecq:ECED1_0743"/>
<dbReference type="HOGENOM" id="CLU_009621_2_1_6"/>
<dbReference type="Proteomes" id="UP000000748">
    <property type="component" value="Chromosome"/>
</dbReference>
<dbReference type="GO" id="GO:0005737">
    <property type="term" value="C:cytoplasm"/>
    <property type="evidence" value="ECO:0007669"/>
    <property type="project" value="UniProtKB-SubCell"/>
</dbReference>
<dbReference type="GO" id="GO:0009380">
    <property type="term" value="C:excinuclease repair complex"/>
    <property type="evidence" value="ECO:0007669"/>
    <property type="project" value="InterPro"/>
</dbReference>
<dbReference type="GO" id="GO:0005524">
    <property type="term" value="F:ATP binding"/>
    <property type="evidence" value="ECO:0007669"/>
    <property type="project" value="UniProtKB-UniRule"/>
</dbReference>
<dbReference type="GO" id="GO:0016887">
    <property type="term" value="F:ATP hydrolysis activity"/>
    <property type="evidence" value="ECO:0007669"/>
    <property type="project" value="InterPro"/>
</dbReference>
<dbReference type="GO" id="GO:0003677">
    <property type="term" value="F:DNA binding"/>
    <property type="evidence" value="ECO:0007669"/>
    <property type="project" value="UniProtKB-UniRule"/>
</dbReference>
<dbReference type="GO" id="GO:0009381">
    <property type="term" value="F:excinuclease ABC activity"/>
    <property type="evidence" value="ECO:0007669"/>
    <property type="project" value="UniProtKB-UniRule"/>
</dbReference>
<dbReference type="GO" id="GO:0004386">
    <property type="term" value="F:helicase activity"/>
    <property type="evidence" value="ECO:0007669"/>
    <property type="project" value="UniProtKB-KW"/>
</dbReference>
<dbReference type="GO" id="GO:0006289">
    <property type="term" value="P:nucleotide-excision repair"/>
    <property type="evidence" value="ECO:0007669"/>
    <property type="project" value="UniProtKB-UniRule"/>
</dbReference>
<dbReference type="GO" id="GO:0009432">
    <property type="term" value="P:SOS response"/>
    <property type="evidence" value="ECO:0007669"/>
    <property type="project" value="UniProtKB-UniRule"/>
</dbReference>
<dbReference type="CDD" id="cd17916">
    <property type="entry name" value="DEXHc_UvrB"/>
    <property type="match status" value="1"/>
</dbReference>
<dbReference type="CDD" id="cd18790">
    <property type="entry name" value="SF2_C_UvrB"/>
    <property type="match status" value="1"/>
</dbReference>
<dbReference type="FunFam" id="3.40.50.300:FF:000257">
    <property type="entry name" value="UvrABC system protein B"/>
    <property type="match status" value="1"/>
</dbReference>
<dbReference type="FunFam" id="3.40.50.300:FF:000401">
    <property type="entry name" value="UvrABC system protein B"/>
    <property type="match status" value="1"/>
</dbReference>
<dbReference type="FunFam" id="3.40.50.300:FF:000477">
    <property type="entry name" value="UvrABC system protein B"/>
    <property type="match status" value="1"/>
</dbReference>
<dbReference type="Gene3D" id="3.40.50.300">
    <property type="entry name" value="P-loop containing nucleotide triphosphate hydrolases"/>
    <property type="match status" value="3"/>
</dbReference>
<dbReference type="Gene3D" id="4.10.860.10">
    <property type="entry name" value="UVR domain"/>
    <property type="match status" value="1"/>
</dbReference>
<dbReference type="HAMAP" id="MF_00204">
    <property type="entry name" value="UvrB"/>
    <property type="match status" value="1"/>
</dbReference>
<dbReference type="InterPro" id="IPR006935">
    <property type="entry name" value="Helicase/UvrB_N"/>
</dbReference>
<dbReference type="InterPro" id="IPR014001">
    <property type="entry name" value="Helicase_ATP-bd"/>
</dbReference>
<dbReference type="InterPro" id="IPR001650">
    <property type="entry name" value="Helicase_C-like"/>
</dbReference>
<dbReference type="InterPro" id="IPR027417">
    <property type="entry name" value="P-loop_NTPase"/>
</dbReference>
<dbReference type="InterPro" id="IPR001943">
    <property type="entry name" value="UVR_dom"/>
</dbReference>
<dbReference type="InterPro" id="IPR036876">
    <property type="entry name" value="UVR_dom_sf"/>
</dbReference>
<dbReference type="InterPro" id="IPR004807">
    <property type="entry name" value="UvrB"/>
</dbReference>
<dbReference type="InterPro" id="IPR041471">
    <property type="entry name" value="UvrB_inter"/>
</dbReference>
<dbReference type="InterPro" id="IPR024759">
    <property type="entry name" value="UvrB_YAD/RRR_dom"/>
</dbReference>
<dbReference type="NCBIfam" id="NF003673">
    <property type="entry name" value="PRK05298.1"/>
    <property type="match status" value="1"/>
</dbReference>
<dbReference type="NCBIfam" id="TIGR00631">
    <property type="entry name" value="uvrb"/>
    <property type="match status" value="1"/>
</dbReference>
<dbReference type="PANTHER" id="PTHR24029">
    <property type="entry name" value="UVRABC SYSTEM PROTEIN B"/>
    <property type="match status" value="1"/>
</dbReference>
<dbReference type="PANTHER" id="PTHR24029:SF0">
    <property type="entry name" value="UVRABC SYSTEM PROTEIN B"/>
    <property type="match status" value="1"/>
</dbReference>
<dbReference type="Pfam" id="PF00271">
    <property type="entry name" value="Helicase_C"/>
    <property type="match status" value="1"/>
</dbReference>
<dbReference type="Pfam" id="PF04851">
    <property type="entry name" value="ResIII"/>
    <property type="match status" value="1"/>
</dbReference>
<dbReference type="Pfam" id="PF02151">
    <property type="entry name" value="UVR"/>
    <property type="match status" value="1"/>
</dbReference>
<dbReference type="Pfam" id="PF12344">
    <property type="entry name" value="UvrB"/>
    <property type="match status" value="1"/>
</dbReference>
<dbReference type="Pfam" id="PF17757">
    <property type="entry name" value="UvrB_inter"/>
    <property type="match status" value="1"/>
</dbReference>
<dbReference type="SMART" id="SM00487">
    <property type="entry name" value="DEXDc"/>
    <property type="match status" value="1"/>
</dbReference>
<dbReference type="SMART" id="SM00490">
    <property type="entry name" value="HELICc"/>
    <property type="match status" value="1"/>
</dbReference>
<dbReference type="SUPFAM" id="SSF46600">
    <property type="entry name" value="C-terminal UvrC-binding domain of UvrB"/>
    <property type="match status" value="1"/>
</dbReference>
<dbReference type="SUPFAM" id="SSF52540">
    <property type="entry name" value="P-loop containing nucleoside triphosphate hydrolases"/>
    <property type="match status" value="2"/>
</dbReference>
<dbReference type="PROSITE" id="PS51192">
    <property type="entry name" value="HELICASE_ATP_BIND_1"/>
    <property type="match status" value="1"/>
</dbReference>
<dbReference type="PROSITE" id="PS51194">
    <property type="entry name" value="HELICASE_CTER"/>
    <property type="match status" value="1"/>
</dbReference>
<dbReference type="PROSITE" id="PS50151">
    <property type="entry name" value="UVR"/>
    <property type="match status" value="1"/>
</dbReference>
<evidence type="ECO:0000255" key="1">
    <source>
        <dbReference type="HAMAP-Rule" id="MF_00204"/>
    </source>
</evidence>
<evidence type="ECO:0000256" key="2">
    <source>
        <dbReference type="SAM" id="MobiDB-lite"/>
    </source>
</evidence>
<organism>
    <name type="scientific">Escherichia coli O81 (strain ED1a)</name>
    <dbReference type="NCBI Taxonomy" id="585397"/>
    <lineage>
        <taxon>Bacteria</taxon>
        <taxon>Pseudomonadati</taxon>
        <taxon>Pseudomonadota</taxon>
        <taxon>Gammaproteobacteria</taxon>
        <taxon>Enterobacterales</taxon>
        <taxon>Enterobacteriaceae</taxon>
        <taxon>Escherichia</taxon>
    </lineage>
</organism>
<accession>B7MQN2</accession>
<name>UVRB_ECO81</name>
<gene>
    <name evidence="1" type="primary">uvrB</name>
    <name type="ordered locus">ECED1_0743</name>
</gene>
<keyword id="KW-0067">ATP-binding</keyword>
<keyword id="KW-0963">Cytoplasm</keyword>
<keyword id="KW-0227">DNA damage</keyword>
<keyword id="KW-0228">DNA excision</keyword>
<keyword id="KW-0234">DNA repair</keyword>
<keyword id="KW-0267">Excision nuclease</keyword>
<keyword id="KW-0347">Helicase</keyword>
<keyword id="KW-0378">Hydrolase</keyword>
<keyword id="KW-0547">Nucleotide-binding</keyword>
<keyword id="KW-0742">SOS response</keyword>